<proteinExistence type="inferred from homology"/>
<keyword id="KW-0414">Isoprene biosynthesis</keyword>
<keyword id="KW-0456">Lyase</keyword>
<keyword id="KW-0479">Metal-binding</keyword>
<keyword id="KW-1185">Reference proteome</keyword>
<sequence>MRIGFGYDVHRLVEGRPLILGGVQVPHDRGLAGHSDADVLLHAVADALLGAAALGDLGAHFPDTDAKWKDADSQALLRRVVERVQHAGYAPHNVDATVLLERPKLRPHVDEMRTNIARALSFPRDAVSVKATTTEGIGFVGREEGVAAQAACTIQSA</sequence>
<reference key="1">
    <citation type="journal article" date="2005" name="Proc. Natl. Acad. Sci. U.S.A.">
        <title>The genome of Salinibacter ruber: convergence and gene exchange among hyperhalophilic bacteria and archaea.</title>
        <authorList>
            <person name="Mongodin E.F."/>
            <person name="Nelson K.E."/>
            <person name="Daugherty S."/>
            <person name="DeBoy R.T."/>
            <person name="Wister J."/>
            <person name="Khouri H."/>
            <person name="Weidman J."/>
            <person name="Walsh D.A."/>
            <person name="Papke R.T."/>
            <person name="Sanchez Perez G."/>
            <person name="Sharma A.K."/>
            <person name="Nesbo C.L."/>
            <person name="MacLeod D."/>
            <person name="Bapteste E."/>
            <person name="Doolittle W.F."/>
            <person name="Charlebois R.L."/>
            <person name="Legault B."/>
            <person name="Rodriguez-Valera F."/>
        </authorList>
    </citation>
    <scope>NUCLEOTIDE SEQUENCE [LARGE SCALE GENOMIC DNA]</scope>
    <source>
        <strain>DSM 13855 / CECT 5946 / M31</strain>
    </source>
</reference>
<accession>Q2S211</accession>
<feature type="chain" id="PRO_0000237749" description="2-C-methyl-D-erythritol 2,4-cyclodiphosphate synthase">
    <location>
        <begin position="1"/>
        <end position="157"/>
    </location>
</feature>
<feature type="binding site" evidence="1">
    <location>
        <begin position="8"/>
        <end position="10"/>
    </location>
    <ligand>
        <name>4-CDP-2-C-methyl-D-erythritol 2-phosphate</name>
        <dbReference type="ChEBI" id="CHEBI:57919"/>
    </ligand>
</feature>
<feature type="binding site" evidence="1">
    <location>
        <position position="8"/>
    </location>
    <ligand>
        <name>a divalent metal cation</name>
        <dbReference type="ChEBI" id="CHEBI:60240"/>
    </ligand>
</feature>
<feature type="binding site" evidence="1">
    <location>
        <position position="10"/>
    </location>
    <ligand>
        <name>a divalent metal cation</name>
        <dbReference type="ChEBI" id="CHEBI:60240"/>
    </ligand>
</feature>
<feature type="binding site" evidence="1">
    <location>
        <begin position="34"/>
        <end position="35"/>
    </location>
    <ligand>
        <name>4-CDP-2-C-methyl-D-erythritol 2-phosphate</name>
        <dbReference type="ChEBI" id="CHEBI:57919"/>
    </ligand>
</feature>
<feature type="binding site" evidence="1">
    <location>
        <position position="42"/>
    </location>
    <ligand>
        <name>a divalent metal cation</name>
        <dbReference type="ChEBI" id="CHEBI:60240"/>
    </ligand>
</feature>
<feature type="binding site" evidence="1">
    <location>
        <begin position="56"/>
        <end position="58"/>
    </location>
    <ligand>
        <name>4-CDP-2-C-methyl-D-erythritol 2-phosphate</name>
        <dbReference type="ChEBI" id="CHEBI:57919"/>
    </ligand>
</feature>
<feature type="binding site" evidence="1">
    <location>
        <begin position="61"/>
        <end position="65"/>
    </location>
    <ligand>
        <name>4-CDP-2-C-methyl-D-erythritol 2-phosphate</name>
        <dbReference type="ChEBI" id="CHEBI:57919"/>
    </ligand>
</feature>
<feature type="binding site" evidence="1">
    <location>
        <begin position="132"/>
        <end position="135"/>
    </location>
    <ligand>
        <name>4-CDP-2-C-methyl-D-erythritol 2-phosphate</name>
        <dbReference type="ChEBI" id="CHEBI:57919"/>
    </ligand>
</feature>
<feature type="binding site" evidence="1">
    <location>
        <position position="139"/>
    </location>
    <ligand>
        <name>4-CDP-2-C-methyl-D-erythritol 2-phosphate</name>
        <dbReference type="ChEBI" id="CHEBI:57919"/>
    </ligand>
</feature>
<feature type="binding site" evidence="1">
    <location>
        <position position="142"/>
    </location>
    <ligand>
        <name>4-CDP-2-C-methyl-D-erythritol 2-phosphate</name>
        <dbReference type="ChEBI" id="CHEBI:57919"/>
    </ligand>
</feature>
<feature type="site" description="Transition state stabilizer" evidence="1">
    <location>
        <position position="34"/>
    </location>
</feature>
<feature type="site" description="Transition state stabilizer" evidence="1">
    <location>
        <position position="133"/>
    </location>
</feature>
<protein>
    <recommendedName>
        <fullName evidence="1">2-C-methyl-D-erythritol 2,4-cyclodiphosphate synthase</fullName>
        <shortName evidence="1">MECDP-synthase</shortName>
        <shortName evidence="1">MECPP-synthase</shortName>
        <shortName evidence="1">MECPS</shortName>
        <ecNumber evidence="1">4.6.1.12</ecNumber>
    </recommendedName>
</protein>
<comment type="function">
    <text evidence="1">Involved in the biosynthesis of isopentenyl diphosphate (IPP) and dimethylallyl diphosphate (DMAPP), two major building blocks of isoprenoid compounds. Catalyzes the conversion of 4-diphosphocytidyl-2-C-methyl-D-erythritol 2-phosphate (CDP-ME2P) to 2-C-methyl-D-erythritol 2,4-cyclodiphosphate (ME-CPP) with a corresponding release of cytidine 5-monophosphate (CMP).</text>
</comment>
<comment type="catalytic activity">
    <reaction evidence="1">
        <text>4-CDP-2-C-methyl-D-erythritol 2-phosphate = 2-C-methyl-D-erythritol 2,4-cyclic diphosphate + CMP</text>
        <dbReference type="Rhea" id="RHEA:23864"/>
        <dbReference type="ChEBI" id="CHEBI:57919"/>
        <dbReference type="ChEBI" id="CHEBI:58483"/>
        <dbReference type="ChEBI" id="CHEBI:60377"/>
        <dbReference type="EC" id="4.6.1.12"/>
    </reaction>
</comment>
<comment type="cofactor">
    <cofactor evidence="1">
        <name>a divalent metal cation</name>
        <dbReference type="ChEBI" id="CHEBI:60240"/>
    </cofactor>
    <text evidence="1">Binds 1 divalent metal cation per subunit.</text>
</comment>
<comment type="pathway">
    <text evidence="1">Isoprenoid biosynthesis; isopentenyl diphosphate biosynthesis via DXP pathway; isopentenyl diphosphate from 1-deoxy-D-xylulose 5-phosphate: step 4/6.</text>
</comment>
<comment type="subunit">
    <text evidence="1">Homotrimer.</text>
</comment>
<comment type="similarity">
    <text evidence="1">Belongs to the IspF family.</text>
</comment>
<name>ISPF_SALRD</name>
<dbReference type="EC" id="4.6.1.12" evidence="1"/>
<dbReference type="EMBL" id="CP000159">
    <property type="protein sequence ID" value="ABC43876.1"/>
    <property type="molecule type" value="Genomic_DNA"/>
</dbReference>
<dbReference type="RefSeq" id="WP_011404396.1">
    <property type="nucleotide sequence ID" value="NC_007677.1"/>
</dbReference>
<dbReference type="RefSeq" id="YP_445770.1">
    <property type="nucleotide sequence ID" value="NC_007677.1"/>
</dbReference>
<dbReference type="SMR" id="Q2S211"/>
<dbReference type="STRING" id="309807.SRU_1651"/>
<dbReference type="EnsemblBacteria" id="ABC43876">
    <property type="protein sequence ID" value="ABC43876"/>
    <property type="gene ID" value="SRU_1651"/>
</dbReference>
<dbReference type="GeneID" id="83728569"/>
<dbReference type="KEGG" id="sru:SRU_1651"/>
<dbReference type="PATRIC" id="fig|309807.25.peg.1712"/>
<dbReference type="eggNOG" id="COG0245">
    <property type="taxonomic scope" value="Bacteria"/>
</dbReference>
<dbReference type="HOGENOM" id="CLU_084630_2_0_10"/>
<dbReference type="OrthoDB" id="9804336at2"/>
<dbReference type="UniPathway" id="UPA00056">
    <property type="reaction ID" value="UER00095"/>
</dbReference>
<dbReference type="Proteomes" id="UP000008674">
    <property type="component" value="Chromosome"/>
</dbReference>
<dbReference type="GO" id="GO:0008685">
    <property type="term" value="F:2-C-methyl-D-erythritol 2,4-cyclodiphosphate synthase activity"/>
    <property type="evidence" value="ECO:0007669"/>
    <property type="project" value="UniProtKB-UniRule"/>
</dbReference>
<dbReference type="GO" id="GO:0046872">
    <property type="term" value="F:metal ion binding"/>
    <property type="evidence" value="ECO:0007669"/>
    <property type="project" value="UniProtKB-KW"/>
</dbReference>
<dbReference type="GO" id="GO:0019288">
    <property type="term" value="P:isopentenyl diphosphate biosynthetic process, methylerythritol 4-phosphate pathway"/>
    <property type="evidence" value="ECO:0007669"/>
    <property type="project" value="UniProtKB-UniRule"/>
</dbReference>
<dbReference type="GO" id="GO:0016114">
    <property type="term" value="P:terpenoid biosynthetic process"/>
    <property type="evidence" value="ECO:0007669"/>
    <property type="project" value="InterPro"/>
</dbReference>
<dbReference type="CDD" id="cd00554">
    <property type="entry name" value="MECDP_synthase"/>
    <property type="match status" value="1"/>
</dbReference>
<dbReference type="FunFam" id="3.30.1330.50:FF:000001">
    <property type="entry name" value="2-C-methyl-D-erythritol 2,4-cyclodiphosphate synthase"/>
    <property type="match status" value="1"/>
</dbReference>
<dbReference type="Gene3D" id="3.30.1330.50">
    <property type="entry name" value="2-C-methyl-D-erythritol 2,4-cyclodiphosphate synthase"/>
    <property type="match status" value="1"/>
</dbReference>
<dbReference type="HAMAP" id="MF_00107">
    <property type="entry name" value="IspF"/>
    <property type="match status" value="1"/>
</dbReference>
<dbReference type="InterPro" id="IPR003526">
    <property type="entry name" value="MECDP_synthase"/>
</dbReference>
<dbReference type="InterPro" id="IPR020555">
    <property type="entry name" value="MECDP_synthase_CS"/>
</dbReference>
<dbReference type="InterPro" id="IPR036571">
    <property type="entry name" value="MECDP_synthase_sf"/>
</dbReference>
<dbReference type="NCBIfam" id="TIGR00151">
    <property type="entry name" value="ispF"/>
    <property type="match status" value="1"/>
</dbReference>
<dbReference type="PANTHER" id="PTHR43181">
    <property type="entry name" value="2-C-METHYL-D-ERYTHRITOL 2,4-CYCLODIPHOSPHATE SYNTHASE, CHLOROPLASTIC"/>
    <property type="match status" value="1"/>
</dbReference>
<dbReference type="PANTHER" id="PTHR43181:SF1">
    <property type="entry name" value="2-C-METHYL-D-ERYTHRITOL 2,4-CYCLODIPHOSPHATE SYNTHASE, CHLOROPLASTIC"/>
    <property type="match status" value="1"/>
</dbReference>
<dbReference type="Pfam" id="PF02542">
    <property type="entry name" value="YgbB"/>
    <property type="match status" value="1"/>
</dbReference>
<dbReference type="SUPFAM" id="SSF69765">
    <property type="entry name" value="IpsF-like"/>
    <property type="match status" value="1"/>
</dbReference>
<dbReference type="PROSITE" id="PS01350">
    <property type="entry name" value="ISPF"/>
    <property type="match status" value="1"/>
</dbReference>
<evidence type="ECO:0000255" key="1">
    <source>
        <dbReference type="HAMAP-Rule" id="MF_00107"/>
    </source>
</evidence>
<gene>
    <name evidence="1" type="primary">ispF</name>
    <name type="ordered locus">SRU_1651</name>
</gene>
<organism>
    <name type="scientific">Salinibacter ruber (strain DSM 13855 / M31)</name>
    <dbReference type="NCBI Taxonomy" id="309807"/>
    <lineage>
        <taxon>Bacteria</taxon>
        <taxon>Pseudomonadati</taxon>
        <taxon>Rhodothermota</taxon>
        <taxon>Rhodothermia</taxon>
        <taxon>Rhodothermales</taxon>
        <taxon>Salinibacteraceae</taxon>
        <taxon>Salinibacter</taxon>
    </lineage>
</organism>